<gene>
    <name evidence="1" type="primary">hslU</name>
    <name type="ordered locus">ABC2274</name>
</gene>
<evidence type="ECO:0000255" key="1">
    <source>
        <dbReference type="HAMAP-Rule" id="MF_00249"/>
    </source>
</evidence>
<reference key="1">
    <citation type="submission" date="2003-10" db="EMBL/GenBank/DDBJ databases">
        <title>The complete genome sequence of the alkaliphilic Bacillus clausii KSM-K16.</title>
        <authorList>
            <person name="Takaki Y."/>
            <person name="Kageyama Y."/>
            <person name="Shimamura S."/>
            <person name="Suzuki H."/>
            <person name="Nishi S."/>
            <person name="Hatada Y."/>
            <person name="Kawai S."/>
            <person name="Ito S."/>
            <person name="Horikoshi K."/>
        </authorList>
    </citation>
    <scope>NUCLEOTIDE SEQUENCE [LARGE SCALE GENOMIC DNA]</scope>
    <source>
        <strain>KSM-K16</strain>
    </source>
</reference>
<organism>
    <name type="scientific">Shouchella clausii (strain KSM-K16)</name>
    <name type="common">Alkalihalobacillus clausii</name>
    <dbReference type="NCBI Taxonomy" id="66692"/>
    <lineage>
        <taxon>Bacteria</taxon>
        <taxon>Bacillati</taxon>
        <taxon>Bacillota</taxon>
        <taxon>Bacilli</taxon>
        <taxon>Bacillales</taxon>
        <taxon>Bacillaceae</taxon>
        <taxon>Shouchella</taxon>
    </lineage>
</organism>
<feature type="chain" id="PRO_0000160475" description="ATP-dependent protease ATPase subunit HslU">
    <location>
        <begin position="1"/>
        <end position="463"/>
    </location>
</feature>
<feature type="binding site" evidence="1">
    <location>
        <position position="19"/>
    </location>
    <ligand>
        <name>ATP</name>
        <dbReference type="ChEBI" id="CHEBI:30616"/>
    </ligand>
</feature>
<feature type="binding site" evidence="1">
    <location>
        <begin position="61"/>
        <end position="66"/>
    </location>
    <ligand>
        <name>ATP</name>
        <dbReference type="ChEBI" id="CHEBI:30616"/>
    </ligand>
</feature>
<feature type="binding site" evidence="1">
    <location>
        <position position="277"/>
    </location>
    <ligand>
        <name>ATP</name>
        <dbReference type="ChEBI" id="CHEBI:30616"/>
    </ligand>
</feature>
<feature type="binding site" evidence="1">
    <location>
        <position position="341"/>
    </location>
    <ligand>
        <name>ATP</name>
        <dbReference type="ChEBI" id="CHEBI:30616"/>
    </ligand>
</feature>
<feature type="binding site" evidence="1">
    <location>
        <position position="413"/>
    </location>
    <ligand>
        <name>ATP</name>
        <dbReference type="ChEBI" id="CHEBI:30616"/>
    </ligand>
</feature>
<comment type="function">
    <text evidence="1">ATPase subunit of a proteasome-like degradation complex; this subunit has chaperone activity. The binding of ATP and its subsequent hydrolysis by HslU are essential for unfolding of protein substrates subsequently hydrolyzed by HslV. HslU recognizes the N-terminal part of its protein substrates and unfolds these before they are guided to HslV for hydrolysis.</text>
</comment>
<comment type="subunit">
    <text evidence="1">A double ring-shaped homohexamer of HslV is capped on each side by a ring-shaped HslU homohexamer. The assembly of the HslU/HslV complex is dependent on binding of ATP.</text>
</comment>
<comment type="subcellular location">
    <subcellularLocation>
        <location evidence="1">Cytoplasm</location>
    </subcellularLocation>
</comment>
<comment type="similarity">
    <text evidence="1">Belongs to the ClpX chaperone family. HslU subfamily.</text>
</comment>
<keyword id="KW-0067">ATP-binding</keyword>
<keyword id="KW-0143">Chaperone</keyword>
<keyword id="KW-0963">Cytoplasm</keyword>
<keyword id="KW-0547">Nucleotide-binding</keyword>
<keyword id="KW-1185">Reference proteome</keyword>
<name>HSLU_SHOC1</name>
<dbReference type="EMBL" id="AP006627">
    <property type="protein sequence ID" value="BAD64809.1"/>
    <property type="molecule type" value="Genomic_DNA"/>
</dbReference>
<dbReference type="RefSeq" id="WP_011247117.1">
    <property type="nucleotide sequence ID" value="NC_006582.1"/>
</dbReference>
<dbReference type="SMR" id="Q5WFQ1"/>
<dbReference type="STRING" id="66692.ABC2274"/>
<dbReference type="KEGG" id="bcl:ABC2274"/>
<dbReference type="eggNOG" id="COG1220">
    <property type="taxonomic scope" value="Bacteria"/>
</dbReference>
<dbReference type="HOGENOM" id="CLU_033123_0_0_9"/>
<dbReference type="OrthoDB" id="9804062at2"/>
<dbReference type="Proteomes" id="UP000001168">
    <property type="component" value="Chromosome"/>
</dbReference>
<dbReference type="GO" id="GO:0009376">
    <property type="term" value="C:HslUV protease complex"/>
    <property type="evidence" value="ECO:0007669"/>
    <property type="project" value="UniProtKB-UniRule"/>
</dbReference>
<dbReference type="GO" id="GO:0005524">
    <property type="term" value="F:ATP binding"/>
    <property type="evidence" value="ECO:0007669"/>
    <property type="project" value="UniProtKB-UniRule"/>
</dbReference>
<dbReference type="GO" id="GO:0016887">
    <property type="term" value="F:ATP hydrolysis activity"/>
    <property type="evidence" value="ECO:0007669"/>
    <property type="project" value="InterPro"/>
</dbReference>
<dbReference type="GO" id="GO:0008233">
    <property type="term" value="F:peptidase activity"/>
    <property type="evidence" value="ECO:0007669"/>
    <property type="project" value="InterPro"/>
</dbReference>
<dbReference type="GO" id="GO:0036402">
    <property type="term" value="F:proteasome-activating activity"/>
    <property type="evidence" value="ECO:0007669"/>
    <property type="project" value="UniProtKB-UniRule"/>
</dbReference>
<dbReference type="GO" id="GO:0043335">
    <property type="term" value="P:protein unfolding"/>
    <property type="evidence" value="ECO:0007669"/>
    <property type="project" value="UniProtKB-UniRule"/>
</dbReference>
<dbReference type="GO" id="GO:0051603">
    <property type="term" value="P:proteolysis involved in protein catabolic process"/>
    <property type="evidence" value="ECO:0007669"/>
    <property type="project" value="TreeGrafter"/>
</dbReference>
<dbReference type="CDD" id="cd19498">
    <property type="entry name" value="RecA-like_HslU"/>
    <property type="match status" value="1"/>
</dbReference>
<dbReference type="FunFam" id="3.40.50.300:FF:000220">
    <property type="entry name" value="ATP-dependent protease ATPase subunit HslU"/>
    <property type="match status" value="1"/>
</dbReference>
<dbReference type="Gene3D" id="1.10.8.60">
    <property type="match status" value="1"/>
</dbReference>
<dbReference type="Gene3D" id="3.40.50.300">
    <property type="entry name" value="P-loop containing nucleotide triphosphate hydrolases"/>
    <property type="match status" value="2"/>
</dbReference>
<dbReference type="HAMAP" id="MF_00249">
    <property type="entry name" value="HslU"/>
    <property type="match status" value="1"/>
</dbReference>
<dbReference type="InterPro" id="IPR003593">
    <property type="entry name" value="AAA+_ATPase"/>
</dbReference>
<dbReference type="InterPro" id="IPR050052">
    <property type="entry name" value="ATP-dep_Clp_protease_ClpX"/>
</dbReference>
<dbReference type="InterPro" id="IPR003959">
    <property type="entry name" value="ATPase_AAA_core"/>
</dbReference>
<dbReference type="InterPro" id="IPR019489">
    <property type="entry name" value="Clp_ATPase_C"/>
</dbReference>
<dbReference type="InterPro" id="IPR004491">
    <property type="entry name" value="HslU"/>
</dbReference>
<dbReference type="InterPro" id="IPR027417">
    <property type="entry name" value="P-loop_NTPase"/>
</dbReference>
<dbReference type="NCBIfam" id="TIGR00390">
    <property type="entry name" value="hslU"/>
    <property type="match status" value="1"/>
</dbReference>
<dbReference type="NCBIfam" id="NF003544">
    <property type="entry name" value="PRK05201.1"/>
    <property type="match status" value="1"/>
</dbReference>
<dbReference type="PANTHER" id="PTHR48102">
    <property type="entry name" value="ATP-DEPENDENT CLP PROTEASE ATP-BINDING SUBUNIT CLPX-LIKE, MITOCHONDRIAL-RELATED"/>
    <property type="match status" value="1"/>
</dbReference>
<dbReference type="PANTHER" id="PTHR48102:SF3">
    <property type="entry name" value="ATP-DEPENDENT PROTEASE ATPASE SUBUNIT HSLU"/>
    <property type="match status" value="1"/>
</dbReference>
<dbReference type="Pfam" id="PF00004">
    <property type="entry name" value="AAA"/>
    <property type="match status" value="1"/>
</dbReference>
<dbReference type="Pfam" id="PF07724">
    <property type="entry name" value="AAA_2"/>
    <property type="match status" value="1"/>
</dbReference>
<dbReference type="SMART" id="SM00382">
    <property type="entry name" value="AAA"/>
    <property type="match status" value="1"/>
</dbReference>
<dbReference type="SMART" id="SM01086">
    <property type="entry name" value="ClpB_D2-small"/>
    <property type="match status" value="1"/>
</dbReference>
<dbReference type="SUPFAM" id="SSF52540">
    <property type="entry name" value="P-loop containing nucleoside triphosphate hydrolases"/>
    <property type="match status" value="1"/>
</dbReference>
<protein>
    <recommendedName>
        <fullName evidence="1">ATP-dependent protease ATPase subunit HslU</fullName>
    </recommendedName>
    <alternativeName>
        <fullName evidence="1">Unfoldase HslU</fullName>
    </alternativeName>
</protein>
<accession>Q5WFQ1</accession>
<sequence>MTSTLTPREIVERLNQYIVGQDGAKRSVAVALRNRYRRTKLDPSMREEITPKNILMIGPTGVGKTEIARRLAKLVGAPFIKVEATKFTEVGYVGRDVESMVRDLVESSVRLVKEERVALVKDEAKQLADKRLIELLVPSMKKETNYKNPFEMLFSQPDKEEEEDGEEELTRANLKRKMAEKLKQGELEERTVTVEVTEQNHGFMDLFQGGAGMEQMGMNMQEMLSNMMPKKKKKRRMTVAEARGVLAEEEAQKLIDMDDVTQEAITRAEQLGIIFIDEIDKVAGKNDQGANVSREGVQRDILPIVEGSTVVTKYGAVKTDHILFIAAGAFHMAKPADLIPELQGRFPIRVELQSLSVDDFVRILVEPDNALTKQYEALLQTEGIEMKFSDEAVRKIATIASEVNQETENIGARRLHTLLEKLLEDLSFEAADIHLETLEITEQYVEEKLGSIAKNRDLSQFIL</sequence>
<proteinExistence type="inferred from homology"/>